<accession>Q0TAG0</accession>
<gene>
    <name evidence="1" type="primary">rhaA</name>
    <name type="ordered locus">ECP_4113</name>
</gene>
<dbReference type="EC" id="5.3.1.14" evidence="1"/>
<dbReference type="EMBL" id="CP000247">
    <property type="protein sequence ID" value="ABG72069.1"/>
    <property type="molecule type" value="Genomic_DNA"/>
</dbReference>
<dbReference type="RefSeq" id="WP_001298699.1">
    <property type="nucleotide sequence ID" value="NC_008253.1"/>
</dbReference>
<dbReference type="SMR" id="Q0TAG0"/>
<dbReference type="KEGG" id="ecp:ECP_4113"/>
<dbReference type="HOGENOM" id="CLU_052790_0_0_6"/>
<dbReference type="UniPathway" id="UPA00541">
    <property type="reaction ID" value="UER00601"/>
</dbReference>
<dbReference type="Proteomes" id="UP000009182">
    <property type="component" value="Chromosome"/>
</dbReference>
<dbReference type="GO" id="GO:0005737">
    <property type="term" value="C:cytoplasm"/>
    <property type="evidence" value="ECO:0007669"/>
    <property type="project" value="UniProtKB-SubCell"/>
</dbReference>
<dbReference type="GO" id="GO:0008740">
    <property type="term" value="F:L-rhamnose isomerase activity"/>
    <property type="evidence" value="ECO:0007669"/>
    <property type="project" value="UniProtKB-UniRule"/>
</dbReference>
<dbReference type="GO" id="GO:0030145">
    <property type="term" value="F:manganese ion binding"/>
    <property type="evidence" value="ECO:0007669"/>
    <property type="project" value="UniProtKB-UniRule"/>
</dbReference>
<dbReference type="GO" id="GO:0019324">
    <property type="term" value="P:L-lyxose metabolic process"/>
    <property type="evidence" value="ECO:0007669"/>
    <property type="project" value="TreeGrafter"/>
</dbReference>
<dbReference type="GO" id="GO:0019301">
    <property type="term" value="P:rhamnose catabolic process"/>
    <property type="evidence" value="ECO:0007669"/>
    <property type="project" value="UniProtKB-UniRule"/>
</dbReference>
<dbReference type="FunFam" id="3.20.20.150:FF:000006">
    <property type="entry name" value="L-rhamnose isomerase"/>
    <property type="match status" value="1"/>
</dbReference>
<dbReference type="Gene3D" id="3.20.20.150">
    <property type="entry name" value="Divalent-metal-dependent TIM barrel enzymes"/>
    <property type="match status" value="1"/>
</dbReference>
<dbReference type="HAMAP" id="MF_00541">
    <property type="entry name" value="RhaA"/>
    <property type="match status" value="1"/>
</dbReference>
<dbReference type="InterPro" id="IPR050337">
    <property type="entry name" value="L-rhamnose_isomerase"/>
</dbReference>
<dbReference type="InterPro" id="IPR009308">
    <property type="entry name" value="Rhamnose_isomerase"/>
</dbReference>
<dbReference type="InterPro" id="IPR036237">
    <property type="entry name" value="Xyl_isomerase-like_sf"/>
</dbReference>
<dbReference type="NCBIfam" id="NF002203">
    <property type="entry name" value="PRK01076.1"/>
    <property type="match status" value="1"/>
</dbReference>
<dbReference type="NCBIfam" id="TIGR01748">
    <property type="entry name" value="rhaA"/>
    <property type="match status" value="1"/>
</dbReference>
<dbReference type="PANTHER" id="PTHR30268">
    <property type="entry name" value="L-RHAMNOSE ISOMERASE"/>
    <property type="match status" value="1"/>
</dbReference>
<dbReference type="PANTHER" id="PTHR30268:SF0">
    <property type="entry name" value="L-RHAMNOSE ISOMERASE"/>
    <property type="match status" value="1"/>
</dbReference>
<dbReference type="Pfam" id="PF06134">
    <property type="entry name" value="RhaA"/>
    <property type="match status" value="1"/>
</dbReference>
<dbReference type="SUPFAM" id="SSF51658">
    <property type="entry name" value="Xylose isomerase-like"/>
    <property type="match status" value="1"/>
</dbReference>
<reference key="1">
    <citation type="journal article" date="2006" name="Mol. Microbiol.">
        <title>Role of pathogenicity island-associated integrases in the genome plasticity of uropathogenic Escherichia coli strain 536.</title>
        <authorList>
            <person name="Hochhut B."/>
            <person name="Wilde C."/>
            <person name="Balling G."/>
            <person name="Middendorf B."/>
            <person name="Dobrindt U."/>
            <person name="Brzuszkiewicz E."/>
            <person name="Gottschalk G."/>
            <person name="Carniel E."/>
            <person name="Hacker J."/>
        </authorList>
    </citation>
    <scope>NUCLEOTIDE SEQUENCE [LARGE SCALE GENOMIC DNA]</scope>
    <source>
        <strain>536 / UPEC</strain>
    </source>
</reference>
<feature type="chain" id="PRO_1000017717" description="L-rhamnose isomerase">
    <location>
        <begin position="1"/>
        <end position="419"/>
    </location>
</feature>
<feature type="binding site" evidence="1">
    <location>
        <position position="262"/>
    </location>
    <ligand>
        <name>Mn(2+)</name>
        <dbReference type="ChEBI" id="CHEBI:29035"/>
    </ligand>
</feature>
<feature type="binding site" evidence="1">
    <location>
        <position position="294"/>
    </location>
    <ligand>
        <name>Mn(2+)</name>
        <dbReference type="ChEBI" id="CHEBI:29035"/>
    </ligand>
</feature>
<feature type="binding site" evidence="1">
    <location>
        <position position="296"/>
    </location>
    <ligand>
        <name>Mn(2+)</name>
        <dbReference type="ChEBI" id="CHEBI:29035"/>
    </ligand>
</feature>
<name>RHAA_ECOL5</name>
<comment type="function">
    <text evidence="1">Catalyzes the interconversion of L-rhamnose and L-rhamnulose.</text>
</comment>
<comment type="catalytic activity">
    <reaction evidence="1">
        <text>L-rhamnopyranose = L-rhamnulose</text>
        <dbReference type="Rhea" id="RHEA:23160"/>
        <dbReference type="ChEBI" id="CHEBI:17897"/>
        <dbReference type="ChEBI" id="CHEBI:62346"/>
        <dbReference type="EC" id="5.3.1.14"/>
    </reaction>
</comment>
<comment type="cofactor">
    <cofactor evidence="1">
        <name>Mn(2+)</name>
        <dbReference type="ChEBI" id="CHEBI:29035"/>
    </cofactor>
    <text evidence="1">Binds 1 Mn(2+) ion per subunit.</text>
</comment>
<comment type="pathway">
    <text evidence="1">Carbohydrate degradation; L-rhamnose degradation; glycerone phosphate from L-rhamnose: step 1/3.</text>
</comment>
<comment type="subunit">
    <text evidence="1">Homotetramer.</text>
</comment>
<comment type="subcellular location">
    <subcellularLocation>
        <location evidence="1">Cytoplasm</location>
    </subcellularLocation>
</comment>
<comment type="similarity">
    <text evidence="1">Belongs to the rhamnose isomerase family.</text>
</comment>
<organism>
    <name type="scientific">Escherichia coli O6:K15:H31 (strain 536 / UPEC)</name>
    <dbReference type="NCBI Taxonomy" id="362663"/>
    <lineage>
        <taxon>Bacteria</taxon>
        <taxon>Pseudomonadati</taxon>
        <taxon>Pseudomonadota</taxon>
        <taxon>Gammaproteobacteria</taxon>
        <taxon>Enterobacterales</taxon>
        <taxon>Enterobacteriaceae</taxon>
        <taxon>Escherichia</taxon>
    </lineage>
</organism>
<keyword id="KW-0963">Cytoplasm</keyword>
<keyword id="KW-0413">Isomerase</keyword>
<keyword id="KW-0464">Manganese</keyword>
<keyword id="KW-0479">Metal-binding</keyword>
<keyword id="KW-0684">Rhamnose metabolism</keyword>
<protein>
    <recommendedName>
        <fullName evidence="1">L-rhamnose isomerase</fullName>
        <ecNumber evidence="1">5.3.1.14</ecNumber>
    </recommendedName>
</protein>
<sequence>MTTQLEQAWELAKQRFAAVGIDVEEALRQLDRLPVSMHCWQGDDVSGFENPEGSLTGGIQATGNYPGKARNASELRADLEQAMRLIPGPKRLNLHAIYLESDTPVSRDQIKPEHFKNWVEWAKANQLGLDFNPSCFSHPLSADGFTLSHADDRIRQFWIDHCKASRRVSAYFGEQLGTPSVMNIWIPDGMKDITVDRLAPRQRLLAALDEVISEKLNPAHHIDAVESKLFGIGAESYTVGSNEFYLGYATSRQTALCLDAGHFHPTEVISDKISAAMLYVPQLLLHVSRPVRWDSDHVVLLDDETQAIASEIVRHDLFDRVHIGLDFFDASINRIAAWVIGTRNMKKALLRALLEPTAELRKLEAAGDYTARLALLEEQKSLPWQAVWEMYCQRHDTPAGSEWLENVRTYEKEILSRRG</sequence>
<proteinExistence type="inferred from homology"/>
<evidence type="ECO:0000255" key="1">
    <source>
        <dbReference type="HAMAP-Rule" id="MF_00541"/>
    </source>
</evidence>